<proteinExistence type="inferred from homology"/>
<feature type="chain" id="PRO_1000077256" description="GTP cyclohydrolase-2">
    <location>
        <begin position="1"/>
        <end position="216"/>
    </location>
</feature>
<feature type="active site" description="Proton acceptor" evidence="1">
    <location>
        <position position="127"/>
    </location>
</feature>
<feature type="active site" description="Nucleophile" evidence="1">
    <location>
        <position position="129"/>
    </location>
</feature>
<feature type="binding site" evidence="1">
    <location>
        <begin position="50"/>
        <end position="54"/>
    </location>
    <ligand>
        <name>GTP</name>
        <dbReference type="ChEBI" id="CHEBI:37565"/>
    </ligand>
</feature>
<feature type="binding site" evidence="1">
    <location>
        <position position="55"/>
    </location>
    <ligand>
        <name>Zn(2+)</name>
        <dbReference type="ChEBI" id="CHEBI:29105"/>
        <note>catalytic</note>
    </ligand>
</feature>
<feature type="binding site" evidence="1">
    <location>
        <position position="66"/>
    </location>
    <ligand>
        <name>Zn(2+)</name>
        <dbReference type="ChEBI" id="CHEBI:29105"/>
        <note>catalytic</note>
    </ligand>
</feature>
<feature type="binding site" evidence="1">
    <location>
        <position position="68"/>
    </location>
    <ligand>
        <name>Zn(2+)</name>
        <dbReference type="ChEBI" id="CHEBI:29105"/>
        <note>catalytic</note>
    </ligand>
</feature>
<feature type="binding site" evidence="1">
    <location>
        <position position="71"/>
    </location>
    <ligand>
        <name>GTP</name>
        <dbReference type="ChEBI" id="CHEBI:37565"/>
    </ligand>
</feature>
<feature type="binding site" evidence="1">
    <location>
        <begin position="93"/>
        <end position="95"/>
    </location>
    <ligand>
        <name>GTP</name>
        <dbReference type="ChEBI" id="CHEBI:37565"/>
    </ligand>
</feature>
<feature type="binding site" evidence="1">
    <location>
        <position position="115"/>
    </location>
    <ligand>
        <name>GTP</name>
        <dbReference type="ChEBI" id="CHEBI:37565"/>
    </ligand>
</feature>
<feature type="binding site" evidence="1">
    <location>
        <position position="150"/>
    </location>
    <ligand>
        <name>GTP</name>
        <dbReference type="ChEBI" id="CHEBI:37565"/>
    </ligand>
</feature>
<feature type="binding site" evidence="1">
    <location>
        <position position="155"/>
    </location>
    <ligand>
        <name>GTP</name>
        <dbReference type="ChEBI" id="CHEBI:37565"/>
    </ligand>
</feature>
<gene>
    <name evidence="1" type="primary">ribA</name>
    <name type="ordered locus">HSM_1520</name>
</gene>
<reference key="1">
    <citation type="submission" date="2008-02" db="EMBL/GenBank/DDBJ databases">
        <title>Complete sequence of Haemophilus somnus 2336.</title>
        <authorList>
            <consortium name="US DOE Joint Genome Institute"/>
            <person name="Siddaramappa S."/>
            <person name="Duncan A.J."/>
            <person name="Challacombe J.F."/>
            <person name="Rainey D."/>
            <person name="Gillaspy A.F."/>
            <person name="Carson M."/>
            <person name="Gipson J."/>
            <person name="Gipson M."/>
            <person name="Bruce D."/>
            <person name="Detter J.C."/>
            <person name="Han C.S."/>
            <person name="Land M."/>
            <person name="Tapia R."/>
            <person name="Thompson L.S."/>
            <person name="Orvis J."/>
            <person name="Zaitshik J."/>
            <person name="Barnes G."/>
            <person name="Brettin T.S."/>
            <person name="Dyer D.W."/>
            <person name="Inzana T.J."/>
        </authorList>
    </citation>
    <scope>NUCLEOTIDE SEQUENCE [LARGE SCALE GENOMIC DNA]</scope>
    <source>
        <strain>2336</strain>
    </source>
</reference>
<name>RIBA_HISS2</name>
<organism>
    <name type="scientific">Histophilus somni (strain 2336)</name>
    <name type="common">Haemophilus somnus</name>
    <dbReference type="NCBI Taxonomy" id="228400"/>
    <lineage>
        <taxon>Bacteria</taxon>
        <taxon>Pseudomonadati</taxon>
        <taxon>Pseudomonadota</taxon>
        <taxon>Gammaproteobacteria</taxon>
        <taxon>Pasteurellales</taxon>
        <taxon>Pasteurellaceae</taxon>
        <taxon>Histophilus</taxon>
    </lineage>
</organism>
<comment type="function">
    <text evidence="1">Catalyzes the conversion of GTP to 2,5-diamino-6-ribosylamino-4(3H)-pyrimidinone 5'-phosphate (DARP), formate and pyrophosphate.</text>
</comment>
<comment type="catalytic activity">
    <reaction evidence="1">
        <text>GTP + 4 H2O = 2,5-diamino-6-hydroxy-4-(5-phosphoribosylamino)-pyrimidine + formate + 2 phosphate + 3 H(+)</text>
        <dbReference type="Rhea" id="RHEA:23704"/>
        <dbReference type="ChEBI" id="CHEBI:15377"/>
        <dbReference type="ChEBI" id="CHEBI:15378"/>
        <dbReference type="ChEBI" id="CHEBI:15740"/>
        <dbReference type="ChEBI" id="CHEBI:37565"/>
        <dbReference type="ChEBI" id="CHEBI:43474"/>
        <dbReference type="ChEBI" id="CHEBI:58614"/>
        <dbReference type="EC" id="3.5.4.25"/>
    </reaction>
</comment>
<comment type="cofactor">
    <cofactor evidence="1">
        <name>Zn(2+)</name>
        <dbReference type="ChEBI" id="CHEBI:29105"/>
    </cofactor>
    <text evidence="1">Binds 1 zinc ion per subunit.</text>
</comment>
<comment type="pathway">
    <text evidence="1">Cofactor biosynthesis; riboflavin biosynthesis; 5-amino-6-(D-ribitylamino)uracil from GTP: step 1/4.</text>
</comment>
<comment type="similarity">
    <text evidence="1">Belongs to the GTP cyclohydrolase II family.</text>
</comment>
<keyword id="KW-0342">GTP-binding</keyword>
<keyword id="KW-0378">Hydrolase</keyword>
<keyword id="KW-0479">Metal-binding</keyword>
<keyword id="KW-0547">Nucleotide-binding</keyword>
<keyword id="KW-0686">Riboflavin biosynthesis</keyword>
<keyword id="KW-0862">Zinc</keyword>
<accession>B0UUP7</accession>
<protein>
    <recommendedName>
        <fullName evidence="1">GTP cyclohydrolase-2</fullName>
        <ecNumber evidence="1">3.5.4.25</ecNumber>
    </recommendedName>
    <alternativeName>
        <fullName evidence="1">GTP cyclohydrolase II</fullName>
    </alternativeName>
</protein>
<dbReference type="EC" id="3.5.4.25" evidence="1"/>
<dbReference type="EMBL" id="CP000947">
    <property type="protein sequence ID" value="ACA31275.1"/>
    <property type="molecule type" value="Genomic_DNA"/>
</dbReference>
<dbReference type="RefSeq" id="WP_011609198.1">
    <property type="nucleotide sequence ID" value="NC_010519.1"/>
</dbReference>
<dbReference type="SMR" id="B0UUP7"/>
<dbReference type="STRING" id="228400.HSM_1520"/>
<dbReference type="GeneID" id="31487822"/>
<dbReference type="KEGG" id="hsm:HSM_1520"/>
<dbReference type="HOGENOM" id="CLU_020273_2_1_6"/>
<dbReference type="UniPathway" id="UPA00275">
    <property type="reaction ID" value="UER00400"/>
</dbReference>
<dbReference type="GO" id="GO:0005829">
    <property type="term" value="C:cytosol"/>
    <property type="evidence" value="ECO:0007669"/>
    <property type="project" value="TreeGrafter"/>
</dbReference>
<dbReference type="GO" id="GO:0005525">
    <property type="term" value="F:GTP binding"/>
    <property type="evidence" value="ECO:0007669"/>
    <property type="project" value="UniProtKB-KW"/>
</dbReference>
<dbReference type="GO" id="GO:0003935">
    <property type="term" value="F:GTP cyclohydrolase II activity"/>
    <property type="evidence" value="ECO:0007669"/>
    <property type="project" value="UniProtKB-UniRule"/>
</dbReference>
<dbReference type="GO" id="GO:0008270">
    <property type="term" value="F:zinc ion binding"/>
    <property type="evidence" value="ECO:0007669"/>
    <property type="project" value="UniProtKB-UniRule"/>
</dbReference>
<dbReference type="GO" id="GO:0009231">
    <property type="term" value="P:riboflavin biosynthetic process"/>
    <property type="evidence" value="ECO:0007669"/>
    <property type="project" value="UniProtKB-UniRule"/>
</dbReference>
<dbReference type="CDD" id="cd00641">
    <property type="entry name" value="GTP_cyclohydro2"/>
    <property type="match status" value="1"/>
</dbReference>
<dbReference type="FunFam" id="3.40.50.10990:FF:000002">
    <property type="entry name" value="GTP cyclohydrolase-2"/>
    <property type="match status" value="1"/>
</dbReference>
<dbReference type="Gene3D" id="3.40.50.10990">
    <property type="entry name" value="GTP cyclohydrolase II"/>
    <property type="match status" value="1"/>
</dbReference>
<dbReference type="HAMAP" id="MF_00179">
    <property type="entry name" value="RibA"/>
    <property type="match status" value="1"/>
</dbReference>
<dbReference type="InterPro" id="IPR032677">
    <property type="entry name" value="GTP_cyclohydro_II"/>
</dbReference>
<dbReference type="InterPro" id="IPR000926">
    <property type="entry name" value="RibA"/>
</dbReference>
<dbReference type="InterPro" id="IPR036144">
    <property type="entry name" value="RibA-like_sf"/>
</dbReference>
<dbReference type="NCBIfam" id="NF001591">
    <property type="entry name" value="PRK00393.1"/>
    <property type="match status" value="1"/>
</dbReference>
<dbReference type="NCBIfam" id="TIGR00505">
    <property type="entry name" value="ribA"/>
    <property type="match status" value="1"/>
</dbReference>
<dbReference type="PANTHER" id="PTHR21327:SF18">
    <property type="entry name" value="3,4-DIHYDROXY-2-BUTANONE 4-PHOSPHATE SYNTHASE"/>
    <property type="match status" value="1"/>
</dbReference>
<dbReference type="PANTHER" id="PTHR21327">
    <property type="entry name" value="GTP CYCLOHYDROLASE II-RELATED"/>
    <property type="match status" value="1"/>
</dbReference>
<dbReference type="Pfam" id="PF00925">
    <property type="entry name" value="GTP_cyclohydro2"/>
    <property type="match status" value="1"/>
</dbReference>
<dbReference type="SUPFAM" id="SSF142695">
    <property type="entry name" value="RibA-like"/>
    <property type="match status" value="1"/>
</dbReference>
<sequence>MSKIQLVAEAKLPTEFGIFRIVGFEFPDTQKEHVALVMGDINDDKPVLARIHSECLTGDALHSLKCDCGFQLATALRQISEAGRGVLIYHREEGRGIGLINKIRAYALQDQGLDTIEANLALGFAADERNFSVCADIFALLGVKQVRLLTNNPNKIETMKKSGINIVERVPLNVGENRYNTEYLDTKAKKMGHFIVHNNEQHLIACPHCQEEIPKK</sequence>
<evidence type="ECO:0000255" key="1">
    <source>
        <dbReference type="HAMAP-Rule" id="MF_00179"/>
    </source>
</evidence>